<keyword id="KW-0961">Cell wall biogenesis/degradation</keyword>
<keyword id="KW-0963">Cytoplasm</keyword>
<keyword id="KW-0378">Hydrolase</keyword>
<keyword id="KW-0479">Metal-binding</keyword>
<keyword id="KW-1185">Reference proteome</keyword>
<keyword id="KW-0862">Zinc</keyword>
<sequence>MLPDKGWLVEARRVPSPHYDCRPDDEKPSLLVVHNISLPPGEFGGPWIDALFTGTIDPDAHPFFAEIAHLRVSAHCLIRRDGEIVQYVPFDKRAWHAGVSNYQGRERCNDFSIGIELEGTDTLAYTDAQYQQLAAVTRTLIASYPAIADNMTGHCNITPDRKTDPGPAFDWPRFRALVALSSHKEMT</sequence>
<gene>
    <name type="primary">ampD</name>
    <name type="ordered locus">STM0146</name>
</gene>
<reference key="1">
    <citation type="journal article" date="2001" name="Nature">
        <title>Complete genome sequence of Salmonella enterica serovar Typhimurium LT2.</title>
        <authorList>
            <person name="McClelland M."/>
            <person name="Sanderson K.E."/>
            <person name="Spieth J."/>
            <person name="Clifton S.W."/>
            <person name="Latreille P."/>
            <person name="Courtney L."/>
            <person name="Porwollik S."/>
            <person name="Ali J."/>
            <person name="Dante M."/>
            <person name="Du F."/>
            <person name="Hou S."/>
            <person name="Layman D."/>
            <person name="Leonard S."/>
            <person name="Nguyen C."/>
            <person name="Scott K."/>
            <person name="Holmes A."/>
            <person name="Grewal N."/>
            <person name="Mulvaney E."/>
            <person name="Ryan E."/>
            <person name="Sun H."/>
            <person name="Florea L."/>
            <person name="Miller W."/>
            <person name="Stoneking T."/>
            <person name="Nhan M."/>
            <person name="Waterston R."/>
            <person name="Wilson R.K."/>
        </authorList>
    </citation>
    <scope>NUCLEOTIDE SEQUENCE [LARGE SCALE GENOMIC DNA]</scope>
    <source>
        <strain>LT2 / SGSC1412 / ATCC 700720</strain>
    </source>
</reference>
<reference key="2">
    <citation type="journal article" date="1993" name="J. Bacteriol.">
        <title>The Salmonella typhimurium nadC gene: sequence determination by use of Mud-P22 and purification of quinolinate phosphoribosyltransferase.</title>
        <authorList>
            <person name="Hughes K.T."/>
            <person name="Dessen A."/>
            <person name="Gray J.P."/>
            <person name="Grubmeyer C."/>
        </authorList>
    </citation>
    <scope>NUCLEOTIDE SEQUENCE [GENOMIC DNA] OF 1-95</scope>
    <source>
        <strain>LT2</strain>
    </source>
</reference>
<accession>P0CL03</accession>
<accession>P30013</accession>
<accession>Q9L4I4</accession>
<proteinExistence type="inferred from homology"/>
<feature type="chain" id="PRO_0000164415" description="1,6-anhydro-N-acetylmuramyl-L-alanine amidase AmpD">
    <location>
        <begin position="1"/>
        <end position="187"/>
    </location>
</feature>
<feature type="domain" description="N-acetylmuramoyl-L-alanine amidase" evidence="4">
    <location>
        <begin position="29"/>
        <end position="167"/>
    </location>
</feature>
<feature type="active site" description="Proton acceptor" evidence="2">
    <location>
        <position position="116"/>
    </location>
</feature>
<feature type="binding site" evidence="3">
    <location>
        <position position="34"/>
    </location>
    <ligand>
        <name>Zn(2+)</name>
        <dbReference type="ChEBI" id="CHEBI:29105"/>
        <note>catalytic</note>
    </ligand>
</feature>
<feature type="binding site" evidence="3">
    <location>
        <position position="154"/>
    </location>
    <ligand>
        <name>Zn(2+)</name>
        <dbReference type="ChEBI" id="CHEBI:29105"/>
        <note>catalytic</note>
    </ligand>
</feature>
<feature type="binding site" evidence="3">
    <location>
        <position position="164"/>
    </location>
    <ligand>
        <name>Zn(2+)</name>
        <dbReference type="ChEBI" id="CHEBI:29105"/>
        <note>catalytic</note>
    </ligand>
</feature>
<feature type="site" description="Transition state stabilizer" evidence="2">
    <location>
        <position position="162"/>
    </location>
</feature>
<dbReference type="EC" id="3.5.1.28" evidence="1"/>
<dbReference type="EMBL" id="AE006468">
    <property type="protein sequence ID" value="AAL19110.1"/>
    <property type="molecule type" value="Genomic_DNA"/>
</dbReference>
<dbReference type="EMBL" id="L07292">
    <property type="protein sequence ID" value="AAA03224.1"/>
    <property type="molecule type" value="Genomic_DNA"/>
</dbReference>
<dbReference type="RefSeq" id="NP_459151.1">
    <property type="nucleotide sequence ID" value="NC_003197.2"/>
</dbReference>
<dbReference type="RefSeq" id="WP_000936330.1">
    <property type="nucleotide sequence ID" value="NC_003197.2"/>
</dbReference>
<dbReference type="SMR" id="P0CL03"/>
<dbReference type="STRING" id="99287.STM0146"/>
<dbReference type="PaxDb" id="99287-STM0146"/>
<dbReference type="GeneID" id="1251664"/>
<dbReference type="KEGG" id="stm:STM0146"/>
<dbReference type="PATRIC" id="fig|99287.12.peg.155"/>
<dbReference type="HOGENOM" id="CLU_049290_1_0_6"/>
<dbReference type="PhylomeDB" id="P0CL03"/>
<dbReference type="BioCyc" id="SENT99287:STM0146-MONOMER"/>
<dbReference type="Proteomes" id="UP000001014">
    <property type="component" value="Chromosome"/>
</dbReference>
<dbReference type="GO" id="GO:0005737">
    <property type="term" value="C:cytoplasm"/>
    <property type="evidence" value="ECO:0007669"/>
    <property type="project" value="UniProtKB-SubCell"/>
</dbReference>
<dbReference type="GO" id="GO:0046872">
    <property type="term" value="F:metal ion binding"/>
    <property type="evidence" value="ECO:0007669"/>
    <property type="project" value="UniProtKB-KW"/>
</dbReference>
<dbReference type="GO" id="GO:0008745">
    <property type="term" value="F:N-acetylmuramoyl-L-alanine amidase activity"/>
    <property type="evidence" value="ECO:0000318"/>
    <property type="project" value="GO_Central"/>
</dbReference>
<dbReference type="GO" id="GO:0071555">
    <property type="term" value="P:cell wall organization"/>
    <property type="evidence" value="ECO:0007669"/>
    <property type="project" value="UniProtKB-KW"/>
</dbReference>
<dbReference type="GO" id="GO:0009253">
    <property type="term" value="P:peptidoglycan catabolic process"/>
    <property type="evidence" value="ECO:0000318"/>
    <property type="project" value="GO_Central"/>
</dbReference>
<dbReference type="GO" id="GO:0009254">
    <property type="term" value="P:peptidoglycan turnover"/>
    <property type="evidence" value="ECO:0000318"/>
    <property type="project" value="GO_Central"/>
</dbReference>
<dbReference type="CDD" id="cd06583">
    <property type="entry name" value="PGRP"/>
    <property type="match status" value="1"/>
</dbReference>
<dbReference type="FunFam" id="3.40.80.10:FF:000002">
    <property type="entry name" value="1,6-anhydro-N-acetylmuramyl-L-alanine amidase"/>
    <property type="match status" value="1"/>
</dbReference>
<dbReference type="Gene3D" id="3.40.80.10">
    <property type="entry name" value="Peptidoglycan recognition protein-like"/>
    <property type="match status" value="1"/>
</dbReference>
<dbReference type="InterPro" id="IPR036505">
    <property type="entry name" value="Amidase/PGRP_sf"/>
</dbReference>
<dbReference type="InterPro" id="IPR002502">
    <property type="entry name" value="Amidase_domain"/>
</dbReference>
<dbReference type="InterPro" id="IPR051206">
    <property type="entry name" value="NAMLAA_amidase_2"/>
</dbReference>
<dbReference type="NCBIfam" id="NF008758">
    <property type="entry name" value="PRK11789.1"/>
    <property type="match status" value="1"/>
</dbReference>
<dbReference type="PANTHER" id="PTHR30417:SF4">
    <property type="entry name" value="1,6-ANHYDRO-N-ACETYLMURAMYL-L-ALANINE AMIDASE AMPD"/>
    <property type="match status" value="1"/>
</dbReference>
<dbReference type="PANTHER" id="PTHR30417">
    <property type="entry name" value="N-ACETYLMURAMOYL-L-ALANINE AMIDASE AMID"/>
    <property type="match status" value="1"/>
</dbReference>
<dbReference type="Pfam" id="PF01510">
    <property type="entry name" value="Amidase_2"/>
    <property type="match status" value="1"/>
</dbReference>
<dbReference type="SMART" id="SM00644">
    <property type="entry name" value="Ami_2"/>
    <property type="match status" value="1"/>
</dbReference>
<dbReference type="SUPFAM" id="SSF55846">
    <property type="entry name" value="N-acetylmuramoyl-L-alanine amidase-like"/>
    <property type="match status" value="1"/>
</dbReference>
<comment type="function">
    <text evidence="1">Involved in cell wall peptidoglycan recycling. Specifically cleaves the amide bond between the lactyl group of N-acetylmuramic acid and the alpha-amino group of the L-alanine in degradation products containing an anhydro N-acetylmuramyl moiety.</text>
</comment>
<comment type="catalytic activity">
    <reaction evidence="1">
        <text>Hydrolyzes the link between N-acetylmuramoyl residues and L-amino acid residues in certain cell-wall glycopeptides.</text>
        <dbReference type="EC" id="3.5.1.28"/>
    </reaction>
</comment>
<comment type="cofactor">
    <cofactor evidence="3">
        <name>Zn(2+)</name>
        <dbReference type="ChEBI" id="CHEBI:29105"/>
    </cofactor>
    <text evidence="3">Zn(2+) is required for amidase activity.</text>
</comment>
<comment type="subcellular location">
    <subcellularLocation>
        <location evidence="1">Cytoplasm</location>
    </subcellularLocation>
</comment>
<comment type="similarity">
    <text evidence="5">Belongs to the N-acetylmuramoyl-L-alanine amidase 2 family.</text>
</comment>
<name>AMPD_SALTY</name>
<organism>
    <name type="scientific">Salmonella typhimurium (strain LT2 / SGSC1412 / ATCC 700720)</name>
    <dbReference type="NCBI Taxonomy" id="99287"/>
    <lineage>
        <taxon>Bacteria</taxon>
        <taxon>Pseudomonadati</taxon>
        <taxon>Pseudomonadota</taxon>
        <taxon>Gammaproteobacteria</taxon>
        <taxon>Enterobacterales</taxon>
        <taxon>Enterobacteriaceae</taxon>
        <taxon>Salmonella</taxon>
    </lineage>
</organism>
<evidence type="ECO:0000250" key="1">
    <source>
        <dbReference type="UniProtKB" id="P13016"/>
    </source>
</evidence>
<evidence type="ECO:0000250" key="2">
    <source>
        <dbReference type="UniProtKB" id="P75820"/>
    </source>
</evidence>
<evidence type="ECO:0000250" key="3">
    <source>
        <dbReference type="UniProtKB" id="P82974"/>
    </source>
</evidence>
<evidence type="ECO:0000255" key="4"/>
<evidence type="ECO:0000305" key="5"/>
<protein>
    <recommendedName>
        <fullName evidence="1">1,6-anhydro-N-acetylmuramyl-L-alanine amidase AmpD</fullName>
        <ecNumber evidence="1">3.5.1.28</ecNumber>
    </recommendedName>
    <alternativeName>
        <fullName evidence="1">N-acetylmuramoyl-L-alanine amidase</fullName>
    </alternativeName>
</protein>